<dbReference type="EMBL" id="X07465">
    <property type="protein sequence ID" value="CAA30348.1"/>
    <property type="molecule type" value="Genomic_DNA"/>
</dbReference>
<dbReference type="EMBL" id="U00096">
    <property type="protein sequence ID" value="AAC74642.1"/>
    <property type="molecule type" value="Genomic_DNA"/>
</dbReference>
<dbReference type="EMBL" id="AP009048">
    <property type="protein sequence ID" value="BAA15274.1"/>
    <property type="molecule type" value="Genomic_DNA"/>
</dbReference>
<dbReference type="PIR" id="A24328">
    <property type="entry name" value="CEECDC"/>
</dbReference>
<dbReference type="RefSeq" id="NP_416087.1">
    <property type="nucleotide sequence ID" value="NC_000913.3"/>
</dbReference>
<dbReference type="RefSeq" id="WP_000920568.1">
    <property type="nucleotide sequence ID" value="NZ_LN832404.1"/>
</dbReference>
<dbReference type="SMR" id="P06965"/>
<dbReference type="BioGRID" id="4260246">
    <property type="interactions" value="138"/>
</dbReference>
<dbReference type="FunCoup" id="P06965">
    <property type="interactions" value="79"/>
</dbReference>
<dbReference type="IntAct" id="P06965">
    <property type="interactions" value="7"/>
</dbReference>
<dbReference type="STRING" id="511145.b1569"/>
<dbReference type="PaxDb" id="511145-b1569"/>
<dbReference type="EnsemblBacteria" id="AAC74642">
    <property type="protein sequence ID" value="AAC74642"/>
    <property type="gene ID" value="b1569"/>
</dbReference>
<dbReference type="GeneID" id="946120"/>
<dbReference type="KEGG" id="ecj:JW1561"/>
<dbReference type="KEGG" id="eco:b1569"/>
<dbReference type="KEGG" id="ecoc:C3026_09045"/>
<dbReference type="PATRIC" id="fig|1411691.4.peg.694"/>
<dbReference type="EchoBASE" id="EB0224"/>
<dbReference type="eggNOG" id="ENOG5031KTA">
    <property type="taxonomic scope" value="Bacteria"/>
</dbReference>
<dbReference type="HOGENOM" id="CLU_194443_3_0_6"/>
<dbReference type="InParanoid" id="P06965"/>
<dbReference type="OMA" id="YQVERMT"/>
<dbReference type="OrthoDB" id="6693632at2"/>
<dbReference type="BioCyc" id="EcoCyc:EG10228-MONOMER"/>
<dbReference type="PRO" id="PR:P06965"/>
<dbReference type="Proteomes" id="UP000000625">
    <property type="component" value="Chromosome"/>
</dbReference>
<dbReference type="GO" id="GO:0003677">
    <property type="term" value="F:DNA binding"/>
    <property type="evidence" value="ECO:0007669"/>
    <property type="project" value="UniProtKB-KW"/>
</dbReference>
<dbReference type="GO" id="GO:0051301">
    <property type="term" value="P:cell division"/>
    <property type="evidence" value="ECO:0007669"/>
    <property type="project" value="UniProtKB-KW"/>
</dbReference>
<dbReference type="GO" id="GO:0006355">
    <property type="term" value="P:regulation of DNA-templated transcription"/>
    <property type="evidence" value="ECO:0000316"/>
    <property type="project" value="EcoCyc"/>
</dbReference>
<dbReference type="Gene3D" id="1.10.260.40">
    <property type="entry name" value="lambda repressor-like DNA-binding domains"/>
    <property type="match status" value="1"/>
</dbReference>
<dbReference type="InterPro" id="IPR010982">
    <property type="entry name" value="Lambda_DNA-bd_dom_sf"/>
</dbReference>
<dbReference type="NCBIfam" id="NF007282">
    <property type="entry name" value="PRK09744.1"/>
    <property type="match status" value="1"/>
</dbReference>
<dbReference type="Pfam" id="PF14549">
    <property type="entry name" value="P22_Cro"/>
    <property type="match status" value="1"/>
</dbReference>
<dbReference type="SUPFAM" id="SSF47413">
    <property type="entry name" value="lambda repressor-like DNA-binding domains"/>
    <property type="match status" value="1"/>
</dbReference>
<accession>P06965</accession>
<protein>
    <recommendedName>
        <fullName>Repressor protein of division inhibition gene dicB</fullName>
    </recommendedName>
</protein>
<comment type="function">
    <text>This protein is a repressor of division inhibition gene dicB.</text>
</comment>
<organism>
    <name type="scientific">Escherichia coli (strain K12)</name>
    <dbReference type="NCBI Taxonomy" id="83333"/>
    <lineage>
        <taxon>Bacteria</taxon>
        <taxon>Pseudomonadati</taxon>
        <taxon>Pseudomonadota</taxon>
        <taxon>Gammaproteobacteria</taxon>
        <taxon>Enterobacterales</taxon>
        <taxon>Enterobacteriaceae</taxon>
        <taxon>Escherichia</taxon>
    </lineage>
</organism>
<feature type="chain" id="PRO_0000079896" description="Repressor protein of division inhibition gene dicB">
    <location>
        <begin position="1"/>
        <end position="76"/>
    </location>
</feature>
<feature type="DNA-binding region" evidence="1">
    <location>
        <begin position="13"/>
        <end position="33"/>
    </location>
</feature>
<reference key="1">
    <citation type="journal article" date="1986" name="Nucleic Acids Res.">
        <title>Control of cell division in Escherichia coli. DNA sequence of dicA and of a second gene complementing mutation dicA1, dicC.</title>
        <authorList>
            <person name="Bejar S."/>
            <person name="Cam K."/>
            <person name="Bouche J.-P."/>
        </authorList>
    </citation>
    <scope>NUCLEOTIDE SEQUENCE [GENOMIC DNA]</scope>
</reference>
<reference key="2">
    <citation type="journal article" date="1988" name="Mol. Gen. Genet.">
        <title>Cell division inhibition gene dicB is regulated by a locus similar to lambdoid bacteriophage immunity loci.</title>
        <authorList>
            <person name="Bejar S."/>
            <person name="Bouche F."/>
            <person name="Bouche J.-P."/>
        </authorList>
    </citation>
    <scope>NUCLEOTIDE SEQUENCE [GENOMIC DNA]</scope>
</reference>
<reference key="3">
    <citation type="journal article" date="1996" name="DNA Res.">
        <title>A 570-kb DNA sequence of the Escherichia coli K-12 genome corresponding to the 28.0-40.1 min region on the linkage map.</title>
        <authorList>
            <person name="Aiba H."/>
            <person name="Baba T."/>
            <person name="Fujita K."/>
            <person name="Hayashi K."/>
            <person name="Inada T."/>
            <person name="Isono K."/>
            <person name="Itoh T."/>
            <person name="Kasai H."/>
            <person name="Kashimoto K."/>
            <person name="Kimura S."/>
            <person name="Kitakawa M."/>
            <person name="Kitagawa M."/>
            <person name="Makino K."/>
            <person name="Miki T."/>
            <person name="Mizobuchi K."/>
            <person name="Mori H."/>
            <person name="Mori T."/>
            <person name="Motomura K."/>
            <person name="Nakade S."/>
            <person name="Nakamura Y."/>
            <person name="Nashimoto H."/>
            <person name="Nishio Y."/>
            <person name="Oshima T."/>
            <person name="Saito N."/>
            <person name="Sampei G."/>
            <person name="Seki Y."/>
            <person name="Sivasundaram S."/>
            <person name="Tagami H."/>
            <person name="Takeda J."/>
            <person name="Takemoto K."/>
            <person name="Takeuchi Y."/>
            <person name="Wada C."/>
            <person name="Yamamoto Y."/>
            <person name="Horiuchi T."/>
        </authorList>
    </citation>
    <scope>NUCLEOTIDE SEQUENCE [LARGE SCALE GENOMIC DNA]</scope>
    <source>
        <strain>K12 / W3110 / ATCC 27325 / DSM 5911</strain>
    </source>
</reference>
<reference key="4">
    <citation type="journal article" date="1997" name="Science">
        <title>The complete genome sequence of Escherichia coli K-12.</title>
        <authorList>
            <person name="Blattner F.R."/>
            <person name="Plunkett G. III"/>
            <person name="Bloch C.A."/>
            <person name="Perna N.T."/>
            <person name="Burland V."/>
            <person name="Riley M."/>
            <person name="Collado-Vides J."/>
            <person name="Glasner J.D."/>
            <person name="Rode C.K."/>
            <person name="Mayhew G.F."/>
            <person name="Gregor J."/>
            <person name="Davis N.W."/>
            <person name="Kirkpatrick H.A."/>
            <person name="Goeden M.A."/>
            <person name="Rose D.J."/>
            <person name="Mau B."/>
            <person name="Shao Y."/>
        </authorList>
    </citation>
    <scope>NUCLEOTIDE SEQUENCE [LARGE SCALE GENOMIC DNA]</scope>
    <source>
        <strain>K12 / MG1655 / ATCC 47076</strain>
    </source>
</reference>
<reference key="5">
    <citation type="journal article" date="2006" name="Mol. Syst. Biol.">
        <title>Highly accurate genome sequences of Escherichia coli K-12 strains MG1655 and W3110.</title>
        <authorList>
            <person name="Hayashi K."/>
            <person name="Morooka N."/>
            <person name="Yamamoto Y."/>
            <person name="Fujita K."/>
            <person name="Isono K."/>
            <person name="Choi S."/>
            <person name="Ohtsubo E."/>
            <person name="Baba T."/>
            <person name="Wanner B.L."/>
            <person name="Mori H."/>
            <person name="Horiuchi T."/>
        </authorList>
    </citation>
    <scope>NUCLEOTIDE SEQUENCE [LARGE SCALE GENOMIC DNA]</scope>
    <source>
        <strain>K12 / W3110 / ATCC 27325 / DSM 5911</strain>
    </source>
</reference>
<gene>
    <name type="primary">dicC</name>
    <name type="ordered locus">b1569</name>
    <name type="ordered locus">JW1561</name>
</gene>
<proteinExistence type="predicted"/>
<name>DICC_ECOLI</name>
<keyword id="KW-0131">Cell cycle</keyword>
<keyword id="KW-0132">Cell division</keyword>
<keyword id="KW-0238">DNA-binding</keyword>
<keyword id="KW-1185">Reference proteome</keyword>
<keyword id="KW-0678">Repressor</keyword>
<keyword id="KW-0804">Transcription</keyword>
<keyword id="KW-0805">Transcription regulation</keyword>
<evidence type="ECO:0000255" key="1"/>
<sequence length="76" mass="8578">MLKTDALLYFGSKTKLAQAAGIRLASLYSWKGDLVPEGRAMRLQEASGGELQYDPKVYDEYRKTKRAGRLNNENHS</sequence>